<feature type="chain" id="PRO_1000007344" description="Large ribosomal subunit protein bL28">
    <location>
        <begin position="1"/>
        <end position="78"/>
    </location>
</feature>
<feature type="region of interest" description="Disordered" evidence="2">
    <location>
        <begin position="1"/>
        <end position="33"/>
    </location>
</feature>
<feature type="compositionally biased region" description="Polar residues" evidence="2">
    <location>
        <begin position="14"/>
        <end position="24"/>
    </location>
</feature>
<keyword id="KW-1185">Reference proteome</keyword>
<keyword id="KW-0687">Ribonucleoprotein</keyword>
<keyword id="KW-0689">Ribosomal protein</keyword>
<organism>
    <name type="scientific">Salinibacter ruber (strain DSM 13855 / M31)</name>
    <dbReference type="NCBI Taxonomy" id="309807"/>
    <lineage>
        <taxon>Bacteria</taxon>
        <taxon>Pseudomonadati</taxon>
        <taxon>Rhodothermota</taxon>
        <taxon>Rhodothermia</taxon>
        <taxon>Rhodothermales</taxon>
        <taxon>Salinibacteraceae</taxon>
        <taxon>Salinibacter</taxon>
    </lineage>
</organism>
<name>RL28_SALRD</name>
<accession>Q2S6K2</accession>
<dbReference type="EMBL" id="CP000159">
    <property type="protein sequence ID" value="ABC44007.1"/>
    <property type="molecule type" value="Genomic_DNA"/>
</dbReference>
<dbReference type="RefSeq" id="WP_011402812.1">
    <property type="nucleotide sequence ID" value="NC_007677.1"/>
</dbReference>
<dbReference type="RefSeq" id="YP_444179.1">
    <property type="nucleotide sequence ID" value="NC_007677.1"/>
</dbReference>
<dbReference type="SMR" id="Q2S6K2"/>
<dbReference type="STRING" id="309807.SRU_0021"/>
<dbReference type="DNASU" id="3851722"/>
<dbReference type="EnsemblBacteria" id="ABC44007">
    <property type="protein sequence ID" value="ABC44007"/>
    <property type="gene ID" value="SRU_0021"/>
</dbReference>
<dbReference type="GeneID" id="83726852"/>
<dbReference type="KEGG" id="sru:SRU_0021"/>
<dbReference type="eggNOG" id="COG0227">
    <property type="taxonomic scope" value="Bacteria"/>
</dbReference>
<dbReference type="HOGENOM" id="CLU_064548_7_2_10"/>
<dbReference type="OrthoDB" id="9805609at2"/>
<dbReference type="Proteomes" id="UP000008674">
    <property type="component" value="Chromosome"/>
</dbReference>
<dbReference type="GO" id="GO:1990904">
    <property type="term" value="C:ribonucleoprotein complex"/>
    <property type="evidence" value="ECO:0007669"/>
    <property type="project" value="UniProtKB-KW"/>
</dbReference>
<dbReference type="GO" id="GO:0005840">
    <property type="term" value="C:ribosome"/>
    <property type="evidence" value="ECO:0007669"/>
    <property type="project" value="UniProtKB-KW"/>
</dbReference>
<dbReference type="GO" id="GO:0003735">
    <property type="term" value="F:structural constituent of ribosome"/>
    <property type="evidence" value="ECO:0007669"/>
    <property type="project" value="InterPro"/>
</dbReference>
<dbReference type="GO" id="GO:0006412">
    <property type="term" value="P:translation"/>
    <property type="evidence" value="ECO:0007669"/>
    <property type="project" value="UniProtKB-UniRule"/>
</dbReference>
<dbReference type="FunFam" id="2.30.170.40:FF:000001">
    <property type="entry name" value="50S ribosomal protein L28"/>
    <property type="match status" value="1"/>
</dbReference>
<dbReference type="Gene3D" id="2.30.170.40">
    <property type="entry name" value="Ribosomal protein L28/L24"/>
    <property type="match status" value="1"/>
</dbReference>
<dbReference type="HAMAP" id="MF_00373">
    <property type="entry name" value="Ribosomal_bL28"/>
    <property type="match status" value="1"/>
</dbReference>
<dbReference type="InterPro" id="IPR026569">
    <property type="entry name" value="Ribosomal_bL28"/>
</dbReference>
<dbReference type="InterPro" id="IPR034704">
    <property type="entry name" value="Ribosomal_bL28/bL31-like_sf"/>
</dbReference>
<dbReference type="InterPro" id="IPR001383">
    <property type="entry name" value="Ribosomal_bL28_bact-type"/>
</dbReference>
<dbReference type="InterPro" id="IPR037147">
    <property type="entry name" value="Ribosomal_bL28_sf"/>
</dbReference>
<dbReference type="NCBIfam" id="TIGR00009">
    <property type="entry name" value="L28"/>
    <property type="match status" value="1"/>
</dbReference>
<dbReference type="PANTHER" id="PTHR13528">
    <property type="entry name" value="39S RIBOSOMAL PROTEIN L28, MITOCHONDRIAL"/>
    <property type="match status" value="1"/>
</dbReference>
<dbReference type="PANTHER" id="PTHR13528:SF2">
    <property type="entry name" value="LARGE RIBOSOMAL SUBUNIT PROTEIN BL28M"/>
    <property type="match status" value="1"/>
</dbReference>
<dbReference type="Pfam" id="PF00830">
    <property type="entry name" value="Ribosomal_L28"/>
    <property type="match status" value="1"/>
</dbReference>
<dbReference type="SUPFAM" id="SSF143800">
    <property type="entry name" value="L28p-like"/>
    <property type="match status" value="1"/>
</dbReference>
<protein>
    <recommendedName>
        <fullName evidence="1">Large ribosomal subunit protein bL28</fullName>
    </recommendedName>
    <alternativeName>
        <fullName evidence="3">50S ribosomal protein L28</fullName>
    </alternativeName>
</protein>
<gene>
    <name evidence="1" type="primary">rpmB</name>
    <name type="ordered locus">SRU_0021</name>
</gene>
<proteinExistence type="inferred from homology"/>
<evidence type="ECO:0000255" key="1">
    <source>
        <dbReference type="HAMAP-Rule" id="MF_00373"/>
    </source>
</evidence>
<evidence type="ECO:0000256" key="2">
    <source>
        <dbReference type="SAM" id="MobiDB-lite"/>
    </source>
</evidence>
<evidence type="ECO:0000305" key="3"/>
<reference key="1">
    <citation type="journal article" date="2005" name="Proc. Natl. Acad. Sci. U.S.A.">
        <title>The genome of Salinibacter ruber: convergence and gene exchange among hyperhalophilic bacteria and archaea.</title>
        <authorList>
            <person name="Mongodin E.F."/>
            <person name="Nelson K.E."/>
            <person name="Daugherty S."/>
            <person name="DeBoy R.T."/>
            <person name="Wister J."/>
            <person name="Khouri H."/>
            <person name="Weidman J."/>
            <person name="Walsh D.A."/>
            <person name="Papke R.T."/>
            <person name="Sanchez Perez G."/>
            <person name="Sharma A.K."/>
            <person name="Nesbo C.L."/>
            <person name="MacLeod D."/>
            <person name="Bapteste E."/>
            <person name="Doolittle W.F."/>
            <person name="Charlebois R.L."/>
            <person name="Legault B."/>
            <person name="Rodriguez-Valera F."/>
        </authorList>
    </citation>
    <scope>NUCLEOTIDE SEQUENCE [LARGE SCALE GENOMIC DNA]</scope>
    <source>
        <strain>DSM 13855 / CECT 5946 / M31</strain>
    </source>
</reference>
<sequence length="78" mass="8930">MARKDDVTGEGPVTGNSVSDSNQKTNRRFKRNLHEKRFYIPSEDRHVKLKVSSKTLKTINKKGIQAVLEEARKQGYDV</sequence>
<comment type="similarity">
    <text evidence="1">Belongs to the bacterial ribosomal protein bL28 family.</text>
</comment>